<comment type="function">
    <text evidence="1">Produces ATP from ADP in the presence of a proton gradient across the membrane. The catalytic sites are hosted primarily by the beta subunits.</text>
</comment>
<comment type="catalytic activity">
    <reaction evidence="1">
        <text>ATP + H2O + 4 H(+)(in) = ADP + phosphate + 5 H(+)(out)</text>
        <dbReference type="Rhea" id="RHEA:57720"/>
        <dbReference type="ChEBI" id="CHEBI:15377"/>
        <dbReference type="ChEBI" id="CHEBI:15378"/>
        <dbReference type="ChEBI" id="CHEBI:30616"/>
        <dbReference type="ChEBI" id="CHEBI:43474"/>
        <dbReference type="ChEBI" id="CHEBI:456216"/>
        <dbReference type="EC" id="7.1.2.2"/>
    </reaction>
</comment>
<comment type="subunit">
    <text evidence="1">F-type ATPases have 2 components, CF(1) - the catalytic core - and CF(0) - the membrane proton channel. CF(1) has five subunits: alpha(3), beta(3), gamma(1), delta(1), epsilon(1). CF(0) has four main subunits: a(1), b(1), b'(1) and c(9-12).</text>
</comment>
<comment type="subcellular location">
    <subcellularLocation>
        <location evidence="1">Plastid</location>
        <location evidence="1">Chloroplast thylakoid membrane</location>
        <topology evidence="1">Peripheral membrane protein</topology>
    </subcellularLocation>
</comment>
<comment type="similarity">
    <text evidence="1">Belongs to the ATPase alpha/beta chains family.</text>
</comment>
<gene>
    <name evidence="1" type="primary">atpB</name>
</gene>
<accession>Q7HHX1</accession>
<name>ATPB_BALSE</name>
<protein>
    <recommendedName>
        <fullName evidence="1">ATP synthase subunit beta, chloroplastic</fullName>
        <ecNumber evidence="1">7.1.2.2</ecNumber>
    </recommendedName>
    <alternativeName>
        <fullName evidence="1">ATP synthase F1 sector subunit beta</fullName>
    </alternativeName>
    <alternativeName>
        <fullName evidence="1">F-ATPase subunit beta</fullName>
    </alternativeName>
</protein>
<dbReference type="EC" id="7.1.2.2" evidence="1"/>
<dbReference type="EMBL" id="AY012436">
    <property type="protein sequence ID" value="AAK14691.1"/>
    <property type="molecule type" value="Genomic_DNA"/>
</dbReference>
<dbReference type="SMR" id="Q7HHX1"/>
<dbReference type="GO" id="GO:0009535">
    <property type="term" value="C:chloroplast thylakoid membrane"/>
    <property type="evidence" value="ECO:0007669"/>
    <property type="project" value="UniProtKB-SubCell"/>
</dbReference>
<dbReference type="GO" id="GO:0005739">
    <property type="term" value="C:mitochondrion"/>
    <property type="evidence" value="ECO:0007669"/>
    <property type="project" value="GOC"/>
</dbReference>
<dbReference type="GO" id="GO:0045259">
    <property type="term" value="C:proton-transporting ATP synthase complex"/>
    <property type="evidence" value="ECO:0007669"/>
    <property type="project" value="UniProtKB-KW"/>
</dbReference>
<dbReference type="GO" id="GO:0005524">
    <property type="term" value="F:ATP binding"/>
    <property type="evidence" value="ECO:0007669"/>
    <property type="project" value="UniProtKB-UniRule"/>
</dbReference>
<dbReference type="GO" id="GO:0016887">
    <property type="term" value="F:ATP hydrolysis activity"/>
    <property type="evidence" value="ECO:0007669"/>
    <property type="project" value="InterPro"/>
</dbReference>
<dbReference type="GO" id="GO:0046933">
    <property type="term" value="F:proton-transporting ATP synthase activity, rotational mechanism"/>
    <property type="evidence" value="ECO:0007669"/>
    <property type="project" value="UniProtKB-UniRule"/>
</dbReference>
<dbReference type="GO" id="GO:0042776">
    <property type="term" value="P:proton motive force-driven mitochondrial ATP synthesis"/>
    <property type="evidence" value="ECO:0007669"/>
    <property type="project" value="TreeGrafter"/>
</dbReference>
<dbReference type="CDD" id="cd18110">
    <property type="entry name" value="ATP-synt_F1_beta_C"/>
    <property type="match status" value="1"/>
</dbReference>
<dbReference type="CDD" id="cd18115">
    <property type="entry name" value="ATP-synt_F1_beta_N"/>
    <property type="match status" value="1"/>
</dbReference>
<dbReference type="CDD" id="cd01133">
    <property type="entry name" value="F1-ATPase_beta_CD"/>
    <property type="match status" value="1"/>
</dbReference>
<dbReference type="FunFam" id="1.10.1140.10:FF:000001">
    <property type="entry name" value="ATP synthase subunit beta"/>
    <property type="match status" value="1"/>
</dbReference>
<dbReference type="FunFam" id="3.40.50.12240:FF:000006">
    <property type="entry name" value="ATP synthase subunit beta"/>
    <property type="match status" value="1"/>
</dbReference>
<dbReference type="FunFam" id="3.40.50.300:FF:000004">
    <property type="entry name" value="ATP synthase subunit beta"/>
    <property type="match status" value="1"/>
</dbReference>
<dbReference type="FunFam" id="2.40.10.170:FF:000002">
    <property type="entry name" value="ATP synthase subunit beta, chloroplastic"/>
    <property type="match status" value="1"/>
</dbReference>
<dbReference type="Gene3D" id="2.40.10.170">
    <property type="match status" value="1"/>
</dbReference>
<dbReference type="Gene3D" id="1.10.1140.10">
    <property type="entry name" value="Bovine Mitochondrial F1-atpase, Atp Synthase Beta Chain, Chain D, domain 3"/>
    <property type="match status" value="1"/>
</dbReference>
<dbReference type="Gene3D" id="3.40.50.300">
    <property type="entry name" value="P-loop containing nucleotide triphosphate hydrolases"/>
    <property type="match status" value="1"/>
</dbReference>
<dbReference type="HAMAP" id="MF_01347">
    <property type="entry name" value="ATP_synth_beta_bact"/>
    <property type="match status" value="1"/>
</dbReference>
<dbReference type="InterPro" id="IPR003593">
    <property type="entry name" value="AAA+_ATPase"/>
</dbReference>
<dbReference type="InterPro" id="IPR055190">
    <property type="entry name" value="ATP-synt_VA_C"/>
</dbReference>
<dbReference type="InterPro" id="IPR005722">
    <property type="entry name" value="ATP_synth_F1_bsu"/>
</dbReference>
<dbReference type="InterPro" id="IPR020003">
    <property type="entry name" value="ATPase_a/bsu_AS"/>
</dbReference>
<dbReference type="InterPro" id="IPR050053">
    <property type="entry name" value="ATPase_alpha/beta_chains"/>
</dbReference>
<dbReference type="InterPro" id="IPR004100">
    <property type="entry name" value="ATPase_F1/V1/A1_a/bsu_N"/>
</dbReference>
<dbReference type="InterPro" id="IPR036121">
    <property type="entry name" value="ATPase_F1/V1/A1_a/bsu_N_sf"/>
</dbReference>
<dbReference type="InterPro" id="IPR000194">
    <property type="entry name" value="ATPase_F1/V1/A1_a/bsu_nucl-bd"/>
</dbReference>
<dbReference type="InterPro" id="IPR024034">
    <property type="entry name" value="ATPase_F1/V1_b/a_C"/>
</dbReference>
<dbReference type="InterPro" id="IPR027417">
    <property type="entry name" value="P-loop_NTPase"/>
</dbReference>
<dbReference type="NCBIfam" id="TIGR01039">
    <property type="entry name" value="atpD"/>
    <property type="match status" value="1"/>
</dbReference>
<dbReference type="PANTHER" id="PTHR15184">
    <property type="entry name" value="ATP SYNTHASE"/>
    <property type="match status" value="1"/>
</dbReference>
<dbReference type="PANTHER" id="PTHR15184:SF71">
    <property type="entry name" value="ATP SYNTHASE SUBUNIT BETA, MITOCHONDRIAL"/>
    <property type="match status" value="1"/>
</dbReference>
<dbReference type="Pfam" id="PF00006">
    <property type="entry name" value="ATP-synt_ab"/>
    <property type="match status" value="1"/>
</dbReference>
<dbReference type="Pfam" id="PF02874">
    <property type="entry name" value="ATP-synt_ab_N"/>
    <property type="match status" value="1"/>
</dbReference>
<dbReference type="Pfam" id="PF22919">
    <property type="entry name" value="ATP-synt_VA_C"/>
    <property type="match status" value="1"/>
</dbReference>
<dbReference type="SMART" id="SM00382">
    <property type="entry name" value="AAA"/>
    <property type="match status" value="1"/>
</dbReference>
<dbReference type="SUPFAM" id="SSF47917">
    <property type="entry name" value="C-terminal domain of alpha and beta subunits of F1 ATP synthase"/>
    <property type="match status" value="1"/>
</dbReference>
<dbReference type="SUPFAM" id="SSF50615">
    <property type="entry name" value="N-terminal domain of alpha and beta subunits of F1 ATP synthase"/>
    <property type="match status" value="1"/>
</dbReference>
<dbReference type="SUPFAM" id="SSF52540">
    <property type="entry name" value="P-loop containing nucleoside triphosphate hydrolases"/>
    <property type="match status" value="1"/>
</dbReference>
<dbReference type="PROSITE" id="PS00152">
    <property type="entry name" value="ATPASE_ALPHA_BETA"/>
    <property type="match status" value="1"/>
</dbReference>
<geneLocation type="chloroplast"/>
<evidence type="ECO:0000255" key="1">
    <source>
        <dbReference type="HAMAP-Rule" id="MF_01347"/>
    </source>
</evidence>
<feature type="chain" id="PRO_0000254445" description="ATP synthase subunit beta, chloroplastic">
    <location>
        <begin position="1"/>
        <end position="498"/>
    </location>
</feature>
<feature type="binding site" evidence="1">
    <location>
        <begin position="172"/>
        <end position="179"/>
    </location>
    <ligand>
        <name>ATP</name>
        <dbReference type="ChEBI" id="CHEBI:30616"/>
    </ligand>
</feature>
<sequence length="498" mass="53798">MRINPTTSSPVVSTLEEKNLGRIAQIIGPVLDVVFPPGKMPNIYNALVVKGRDTVGQQINVTCEVQQLLGNNRVRAVAMSATDGLMRGMEVIDTGAPLSVPVGGATLGRIFNVLGEPVDNLGPVDTRTTSPIHRSAPAFIQLDTKLSIFETGIKVVDLLAPYRRGGKIGLFGGAGVGKTVLIMELINNIAKAHGGVSVFGGVGERTREGNDLYMEMKESGVINEKNIAESKVALVYGQMNEPPGARMRVGLTALTMAEYFRDVNEQDVLLFIDNIFRFVQAGSEVSALLGRMPSAVGYQPTLSTEMGSLQERITSTKEGSITSIQAVYVPADDLTDPAPATTFAHLDATTVLSRVLAAKGIYPAVDPLDSTSTMLQPRIVGEEHYETAQRVKQTSQRYKELQDIIAILGLDELSEEDRLTVARARKIERFLSQPFFVAEVFTGSPGKYVGLAETIRGFQLILSGELDGLPEQAFYLVGNIDEATAKAMNLEVESKLKK</sequence>
<reference key="1">
    <citation type="journal article" date="2002" name="Syst. Biol.">
        <title>A molecular phylogenetic study of the Palmae (Arecaceae) based on atpB, rbcL, and 18S nrDNA sequences.</title>
        <authorList>
            <person name="Hahn W.J."/>
        </authorList>
    </citation>
    <scope>NUCLEOTIDE SEQUENCE [GENOMIC DNA]</scope>
</reference>
<proteinExistence type="inferred from homology"/>
<organism>
    <name type="scientific">Balaka seemannii</name>
    <dbReference type="NCBI Taxonomy" id="115448"/>
    <lineage>
        <taxon>Eukaryota</taxon>
        <taxon>Viridiplantae</taxon>
        <taxon>Streptophyta</taxon>
        <taxon>Embryophyta</taxon>
        <taxon>Tracheophyta</taxon>
        <taxon>Spermatophyta</taxon>
        <taxon>Magnoliopsida</taxon>
        <taxon>Liliopsida</taxon>
        <taxon>Arecaceae</taxon>
        <taxon>Arecoideae</taxon>
        <taxon>Areceae</taxon>
        <taxon>Ptychospermatinae</taxon>
        <taxon>Balaka</taxon>
    </lineage>
</organism>
<keyword id="KW-0066">ATP synthesis</keyword>
<keyword id="KW-0067">ATP-binding</keyword>
<keyword id="KW-0139">CF(1)</keyword>
<keyword id="KW-0150">Chloroplast</keyword>
<keyword id="KW-0375">Hydrogen ion transport</keyword>
<keyword id="KW-0406">Ion transport</keyword>
<keyword id="KW-0472">Membrane</keyword>
<keyword id="KW-0547">Nucleotide-binding</keyword>
<keyword id="KW-0934">Plastid</keyword>
<keyword id="KW-0793">Thylakoid</keyword>
<keyword id="KW-1278">Translocase</keyword>
<keyword id="KW-0813">Transport</keyword>